<name>PSA1_HALVD</name>
<reference key="1">
    <citation type="journal article" date="1999" name="J. Bacteriol.">
        <title>Halophilic 20S proteasomes of the archaeon Haloferax volcanii: purification, characterization, and gene sequence analysis.</title>
        <authorList>
            <person name="Wilson H.L."/>
            <person name="Aldrich H.C."/>
            <person name="Maupin-Furlow J."/>
        </authorList>
    </citation>
    <scope>NUCLEOTIDE SEQUENCE [GENOMIC DNA]</scope>
    <scope>PROTEIN SEQUENCE OF 23-30; 89-95 AND 150-163</scope>
    <scope>BLOCKAGE OF N-TERMINUS</scope>
    <scope>FUNCTION</scope>
    <scope>CATALYTIC ACTIVITY</scope>
    <scope>SUBSTRATE SPECIFICITY</scope>
    <scope>BIOPHYSICOCHEMICAL PROPERTIES</scope>
    <scope>ACTIVITY REGULATION</scope>
    <scope>SALT REQUIREMENT</scope>
    <scope>SUBUNIT</scope>
</reference>
<reference key="2">
    <citation type="journal article" date="2010" name="PLoS ONE">
        <title>The complete genome sequence of Haloferax volcanii DS2, a model archaeon.</title>
        <authorList>
            <person name="Hartman A.L."/>
            <person name="Norais C."/>
            <person name="Badger J.H."/>
            <person name="Delmas S."/>
            <person name="Haldenby S."/>
            <person name="Madupu R."/>
            <person name="Robinson J."/>
            <person name="Khouri H."/>
            <person name="Ren Q."/>
            <person name="Lowe T.M."/>
            <person name="Maupin-Furlow J."/>
            <person name="Pohlschroder M."/>
            <person name="Daniels C."/>
            <person name="Pfeiffer F."/>
            <person name="Allers T."/>
            <person name="Eisen J.A."/>
        </authorList>
    </citation>
    <scope>NUCLEOTIDE SEQUENCE [LARGE SCALE GENOMIC DNA]</scope>
    <source>
        <strain>ATCC 29605 / DSM 3757 / JCM 8879 / NBRC 14742 / NCIMB 2012 / VKM B-1768 / DS2</strain>
    </source>
</reference>
<reference key="3">
    <citation type="journal article" date="2003" name="J. Bacteriol.">
        <title>Subunit topology of two 20S proteasomes from Haloferax volcanii.</title>
        <authorList>
            <person name="Kaczowka S.J."/>
            <person name="Maupin-Furlow J.A."/>
        </authorList>
    </citation>
    <scope>SUBUNIT</scope>
</reference>
<reference key="4">
    <citation type="journal article" date="2004" name="J. Bacteriol.">
        <title>Differential regulation of the PanA and PanB proteasome-activating nucleotidase and 20S proteasomal proteins of the haloarchaeon Haloferax volcanii.</title>
        <authorList>
            <person name="Reuter C.J."/>
            <person name="Kaczowka S.J."/>
            <person name="Maupin-Furlow J.A."/>
        </authorList>
    </citation>
    <scope>INDUCTION</scope>
</reference>
<reference key="5">
    <citation type="journal article" date="2006" name="J. Bacteriol.">
        <title>Posttranslational modification of the 20S proteasomal proteins of the archaeon Haloferax volcanii.</title>
        <authorList>
            <person name="Humbard M.A."/>
            <person name="Stevens S.M. Jr."/>
            <person name="Maupin-Furlow J.A."/>
        </authorList>
    </citation>
    <scope>ACETYLATION AT MET-1</scope>
    <scope>CLEAVAGE OF INITIATOR METHIONINE</scope>
</reference>
<reference key="6">
    <citation type="journal article" date="2008" name="J. Bacteriol.">
        <title>Proteasomal components required for cell growth and stress responses in the haloarchaeon Haloferax volcanii.</title>
        <authorList>
            <person name="Zhou G."/>
            <person name="Kowalczyk D."/>
            <person name="Humbard M.A."/>
            <person name="Rohatgi S."/>
            <person name="Maupin-Furlow J.A."/>
        </authorList>
    </citation>
    <scope>DISRUPTION PHENOTYPE</scope>
</reference>
<reference key="7">
    <citation type="journal article" date="2009" name="J. Bacteriol.">
        <title>The N-terminal penultimate residue of 20S proteasome alpha1 influences its N(alpha) acetylation and protein levels as well as growth rate and stress responses of Haloferax volcanii.</title>
        <authorList>
            <person name="Humbard M.A."/>
            <person name="Zhou G."/>
            <person name="Maupin-Furlow J.A."/>
        </authorList>
    </citation>
    <scope>ACETYLATION</scope>
    <scope>MUTAGENESIS OF GLN-2 AND 2-GLN--ARG-12</scope>
</reference>
<gene>
    <name evidence="1" type="primary">psmA1</name>
    <name type="synonym">psmA</name>
    <name type="ordered locus">HVO_1091</name>
</gene>
<feature type="chain" id="PRO_0000124171" description="Proteasome subunit alpha 1">
    <location>
        <begin position="1"/>
        <end position="252"/>
    </location>
</feature>
<feature type="initiator methionine" description="Removed; alternate" evidence="5">
    <location>
        <position position="1"/>
    </location>
</feature>
<feature type="chain" id="PRO_0000397604" description="Proteasome subunit alpha 1, N-terminally processed">
    <location>
        <begin position="2"/>
        <end position="252"/>
    </location>
</feature>
<feature type="modified residue" description="N-acetylmethionine; alternate" evidence="5">
    <location>
        <position position="1"/>
    </location>
</feature>
<feature type="mutagenesis site" description="Prevents acetylation of Met-1. Enhances peptidase activity of the proteasome. Renders the cells less tolerant of hypoosmotic stress than the wild-type." evidence="7">
    <location>
        <begin position="2"/>
        <end position="12"/>
    </location>
</feature>
<feature type="mutagenesis site" description="Enhances cleavage of PsmA1 by methionine aminopeptidase (MAP), resulting in acetylation of the N-terminal alanine. Enhances peptidase activity of the proteasome. Renders the cells less tolerant of hypoosmotic stress than the wild-type." evidence="7">
    <original>Q</original>
    <variation>A</variation>
    <location>
        <position position="2"/>
    </location>
</feature>
<feature type="mutagenesis site" description="Does not alter the prevalence of the alpha1 subunit in N-acetylated form in proteasomes. Renders the cells more tolerant of hypoosmotic and high-temperature stress than the wild-type." evidence="7">
    <original>Q</original>
    <variation>D</variation>
    <variation>P</variation>
    <variation>T</variation>
    <location>
        <position position="2"/>
    </location>
</feature>
<feature type="sequence conflict" description="In Ref. 1; AAD53404." evidence="8" ref="1">
    <original>R</original>
    <variation>H</variation>
    <location>
        <position position="96"/>
    </location>
</feature>
<sequence>MQGQAQQQAYDRGITIFSPDGRLYQVEYAREAVKRGTASIGVRTPEGVVLAADKRSRSPLMEPTSVEKIHKADDHIGIASAGHVADARQLIDFARRQSQVNRLRYGEPIGIETLTKEVTDHIQQYTQVGGARPFGVALLIGGVENGTPRLYETDPSGTPYEWKAVSIGADRGDHQEHLEENFRDDLTLDEGIELALEAIASTSDEGTAPDGVDVATVSAETERFVELSNDEIESYLEANDLLATEDDEQTEE</sequence>
<evidence type="ECO:0000255" key="1">
    <source>
        <dbReference type="HAMAP-Rule" id="MF_00289"/>
    </source>
</evidence>
<evidence type="ECO:0000269" key="2">
    <source>
    </source>
</evidence>
<evidence type="ECO:0000269" key="3">
    <source>
    </source>
</evidence>
<evidence type="ECO:0000269" key="4">
    <source>
    </source>
</evidence>
<evidence type="ECO:0000269" key="5">
    <source>
    </source>
</evidence>
<evidence type="ECO:0000269" key="6">
    <source>
    </source>
</evidence>
<evidence type="ECO:0000269" key="7">
    <source>
    </source>
</evidence>
<evidence type="ECO:0000305" key="8"/>
<proteinExistence type="evidence at protein level"/>
<accession>Q9V2V6</accession>
<accession>D4GW11</accession>
<protein>
    <recommendedName>
        <fullName evidence="1">Proteasome subunit alpha 1</fullName>
    </recommendedName>
    <alternativeName>
        <fullName evidence="1">20S proteasome alpha subunit 1</fullName>
    </alternativeName>
    <alternativeName>
        <fullName evidence="1">Proteasome core protein PsmA 1</fullName>
    </alternativeName>
    <component>
        <recommendedName>
            <fullName evidence="1">Proteasome subunit alpha 1, N-terminally processed</fullName>
        </recommendedName>
    </component>
</protein>
<organism>
    <name type="scientific">Haloferax volcanii (strain ATCC 29605 / DSM 3757 / JCM 8879 / NBRC 14742 / NCIMB 2012 / VKM B-1768 / DS2)</name>
    <name type="common">Halobacterium volcanii</name>
    <dbReference type="NCBI Taxonomy" id="309800"/>
    <lineage>
        <taxon>Archaea</taxon>
        <taxon>Methanobacteriati</taxon>
        <taxon>Methanobacteriota</taxon>
        <taxon>Stenosarchaea group</taxon>
        <taxon>Halobacteria</taxon>
        <taxon>Halobacteriales</taxon>
        <taxon>Haloferacaceae</taxon>
        <taxon>Haloferax</taxon>
    </lineage>
</organism>
<keyword id="KW-0007">Acetylation</keyword>
<keyword id="KW-0963">Cytoplasm</keyword>
<keyword id="KW-0903">Direct protein sequencing</keyword>
<keyword id="KW-0647">Proteasome</keyword>
<keyword id="KW-1185">Reference proteome</keyword>
<comment type="function">
    <text evidence="1 2">Component of the proteasome core, a large protease complex with broad specificity involved in protein degradation. The H.volcanii alpha1-beta proteasome is able to cleave oligopeptides after Phe, Tyr and Trp, poorly after Glu but not after Arg. Thus, displays chymotrypsin-like activity, low caspase-like activity but no trypsin-like activity.</text>
</comment>
<comment type="activity regulation">
    <text evidence="1 2">The formation of the proteasomal ATPase PAN-20S proteasome complex, via the docking of the C-termini of PAN into the intersubunit pockets in the alpha-rings, triggers opening of the gate for substrate entry. Interconversion between the open-gate and close-gate conformations leads to a dynamic regulation of the 20S proteasome proteolysis activity (By similarity). In vitro, the chymotrypsin-like activity of the alpha1-beta proteasome is potently inhibited by carbobenzoxyl-leucinyl-leucinyl-leucinal-H (MG132) and significantly by N-acetyl-leucinyl-leucinyl-norleucinal-H (calpain inhibitor I).</text>
</comment>
<comment type="biophysicochemical properties">
    <phDependence>
        <text evidence="2">Optimum pH is 7.0-9.3 for the Suc-LLVY-Amc hydrolyzing activity (with the alpha1-beta proteasome subtype).</text>
    </phDependence>
    <temperatureDependence>
        <text evidence="2">Optimum temperature is 75 degrees Celsius for the Suc-LLVY-Amc hydrolyzing activity (with the alpha1-beta proteasome subtype).</text>
    </temperatureDependence>
</comment>
<comment type="subunit">
    <text evidence="2 3">The 20S proteasome core is composed of 14 alpha and 14 beta subunits that assemble into four stacked heptameric rings, resulting in a barrel-shaped structure. The two inner rings, each composed of seven catalytic beta subunits, are sandwiched by two outer rings, each composed of seven alpha subunits. H.volcanii produces at least 2 types of 20S proteasomes: an alpha1-beta proteasome and a proteasome containing all three subunits (alpha1, alpha2, and beta) that appears to be asymmetrical with homo-oligomeric alpha1 and alpha2 rings positioned on separate ends. The catalytic chamber with the active sites is on the inside of the barrel. Has probably a gated structure, the ends of the cylinder being occluded by the N-termini of the alpha-subunits. Is likely capped at one or both ends by the proteasome regulatory ATPase, PAN.</text>
</comment>
<comment type="subcellular location">
    <subcellularLocation>
        <location evidence="1">Cytoplasm</location>
    </subcellularLocation>
</comment>
<comment type="induction">
    <text evidence="4">Up-regulated at the mRNA level during transition from exponential to stationary phase. However, at the protein level, PsmA 1 is expressed at a high and relatively constant level throughout growth.</text>
</comment>
<comment type="PTM">
    <text evidence="5 7">Acetylated. The acetylated form at Met-1 was shown to be in 100-fold excess of the unacetylated form with the initiator methionine removed in whole cells and purified 20S proteasomes.</text>
</comment>
<comment type="disruption phenotype">
    <text evidence="6">Strains lacking psmA1 gene alone display relatively normal growth rate and overall cell yield, but they are more sensitive to growth on organic versus inorganic nitrogen sources and hypo-osmotic stress, and they show limited growth in the presence of L-canavanine. Abolition of alpha1 subunit synthesis also has a severe impact on the ability of cells to withstand thermal stress. Moreover, depletion of psmA1 and psmA2 together renders the cells inviable.</text>
</comment>
<comment type="miscellaneous">
    <text>H.volcanii proteasome requires high concentrations of salt, similar to the extracellular environment and cytoplasm of this organism, for complex stability and optimal activity.</text>
</comment>
<comment type="similarity">
    <text evidence="1">Belongs to the peptidase T1A family.</text>
</comment>
<dbReference type="EMBL" id="AF126260">
    <property type="protein sequence ID" value="AAD53404.1"/>
    <property type="molecule type" value="Genomic_DNA"/>
</dbReference>
<dbReference type="EMBL" id="CP001956">
    <property type="protein sequence ID" value="ADE04430.1"/>
    <property type="molecule type" value="Genomic_DNA"/>
</dbReference>
<dbReference type="PIR" id="T48678">
    <property type="entry name" value="T48678"/>
</dbReference>
<dbReference type="RefSeq" id="WP_004043847.1">
    <property type="nucleotide sequence ID" value="NC_013967.1"/>
</dbReference>
<dbReference type="SMR" id="Q9V2V6"/>
<dbReference type="IntAct" id="Q9V2V6">
    <property type="interactions" value="1"/>
</dbReference>
<dbReference type="STRING" id="309800.HVO_1091"/>
<dbReference type="iPTMnet" id="Q9V2V6"/>
<dbReference type="PaxDb" id="309800-C498_13299"/>
<dbReference type="EnsemblBacteria" id="ADE04430">
    <property type="protein sequence ID" value="ADE04430"/>
    <property type="gene ID" value="HVO_1091"/>
</dbReference>
<dbReference type="GeneID" id="8925549"/>
<dbReference type="KEGG" id="hvo:HVO_1091"/>
<dbReference type="eggNOG" id="arCOG00971">
    <property type="taxonomic scope" value="Archaea"/>
</dbReference>
<dbReference type="HOGENOM" id="CLU_035750_4_1_2"/>
<dbReference type="OrthoDB" id="9421at2157"/>
<dbReference type="Proteomes" id="UP000008243">
    <property type="component" value="Chromosome"/>
</dbReference>
<dbReference type="GO" id="GO:0005737">
    <property type="term" value="C:cytoplasm"/>
    <property type="evidence" value="ECO:0007669"/>
    <property type="project" value="UniProtKB-SubCell"/>
</dbReference>
<dbReference type="GO" id="GO:0019773">
    <property type="term" value="C:proteasome core complex, alpha-subunit complex"/>
    <property type="evidence" value="ECO:0000314"/>
    <property type="project" value="UniProtKB"/>
</dbReference>
<dbReference type="GO" id="GO:0004175">
    <property type="term" value="F:endopeptidase activity"/>
    <property type="evidence" value="ECO:0000314"/>
    <property type="project" value="UniProtKB"/>
</dbReference>
<dbReference type="GO" id="GO:0004298">
    <property type="term" value="F:threonine-type endopeptidase activity"/>
    <property type="evidence" value="ECO:0007669"/>
    <property type="project" value="InterPro"/>
</dbReference>
<dbReference type="GO" id="GO:0010498">
    <property type="term" value="P:proteasomal protein catabolic process"/>
    <property type="evidence" value="ECO:0000314"/>
    <property type="project" value="UniProtKB"/>
</dbReference>
<dbReference type="GO" id="GO:0006511">
    <property type="term" value="P:ubiquitin-dependent protein catabolic process"/>
    <property type="evidence" value="ECO:0007669"/>
    <property type="project" value="InterPro"/>
</dbReference>
<dbReference type="CDD" id="cd03756">
    <property type="entry name" value="proteasome_alpha_archeal"/>
    <property type="match status" value="1"/>
</dbReference>
<dbReference type="FunFam" id="3.60.20.10:FF:000004">
    <property type="entry name" value="Proteasome subunit alpha type-4"/>
    <property type="match status" value="1"/>
</dbReference>
<dbReference type="Gene3D" id="3.60.20.10">
    <property type="entry name" value="Glutamine Phosphoribosylpyrophosphate, subunit 1, domain 1"/>
    <property type="match status" value="1"/>
</dbReference>
<dbReference type="HAMAP" id="MF_00289_A">
    <property type="entry name" value="Proteasome_A_A"/>
    <property type="match status" value="1"/>
</dbReference>
<dbReference type="InterPro" id="IPR029055">
    <property type="entry name" value="Ntn_hydrolases_N"/>
</dbReference>
<dbReference type="InterPro" id="IPR050115">
    <property type="entry name" value="Proteasome_alpha"/>
</dbReference>
<dbReference type="InterPro" id="IPR023332">
    <property type="entry name" value="Proteasome_alpha-type"/>
</dbReference>
<dbReference type="InterPro" id="IPR019982">
    <property type="entry name" value="Proteasome_asu_arc"/>
</dbReference>
<dbReference type="InterPro" id="IPR000426">
    <property type="entry name" value="Proteasome_asu_N"/>
</dbReference>
<dbReference type="InterPro" id="IPR001353">
    <property type="entry name" value="Proteasome_sua/b"/>
</dbReference>
<dbReference type="NCBIfam" id="TIGR03633">
    <property type="entry name" value="arc_protsome_A"/>
    <property type="match status" value="1"/>
</dbReference>
<dbReference type="NCBIfam" id="NF003075">
    <property type="entry name" value="PRK03996.1"/>
    <property type="match status" value="1"/>
</dbReference>
<dbReference type="PANTHER" id="PTHR11599">
    <property type="entry name" value="PROTEASOME SUBUNIT ALPHA/BETA"/>
    <property type="match status" value="1"/>
</dbReference>
<dbReference type="Pfam" id="PF00227">
    <property type="entry name" value="Proteasome"/>
    <property type="match status" value="1"/>
</dbReference>
<dbReference type="Pfam" id="PF10584">
    <property type="entry name" value="Proteasome_A_N"/>
    <property type="match status" value="1"/>
</dbReference>
<dbReference type="SMART" id="SM00948">
    <property type="entry name" value="Proteasome_A_N"/>
    <property type="match status" value="1"/>
</dbReference>
<dbReference type="SUPFAM" id="SSF56235">
    <property type="entry name" value="N-terminal nucleophile aminohydrolases (Ntn hydrolases)"/>
    <property type="match status" value="1"/>
</dbReference>
<dbReference type="PROSITE" id="PS00388">
    <property type="entry name" value="PROTEASOME_ALPHA_1"/>
    <property type="match status" value="1"/>
</dbReference>
<dbReference type="PROSITE" id="PS51475">
    <property type="entry name" value="PROTEASOME_ALPHA_2"/>
    <property type="match status" value="1"/>
</dbReference>